<keyword id="KW-0067">ATP-binding</keyword>
<keyword id="KW-0173">Coenzyme A biosynthesis</keyword>
<keyword id="KW-0963">Cytoplasm</keyword>
<keyword id="KW-0418">Kinase</keyword>
<keyword id="KW-0547">Nucleotide-binding</keyword>
<keyword id="KW-1185">Reference proteome</keyword>
<keyword id="KW-0808">Transferase</keyword>
<accession>Q8EJP9</accession>
<organism>
    <name type="scientific">Shewanella oneidensis (strain ATCC 700550 / JCM 31522 / CIP 106686 / LMG 19005 / NCIMB 14063 / MR-1)</name>
    <dbReference type="NCBI Taxonomy" id="211586"/>
    <lineage>
        <taxon>Bacteria</taxon>
        <taxon>Pseudomonadati</taxon>
        <taxon>Pseudomonadota</taxon>
        <taxon>Gammaproteobacteria</taxon>
        <taxon>Alteromonadales</taxon>
        <taxon>Shewanellaceae</taxon>
        <taxon>Shewanella</taxon>
    </lineage>
</organism>
<comment type="function">
    <text evidence="1">Catalyzes the phosphorylation of the 3'-hydroxyl group of dephosphocoenzyme A to form coenzyme A.</text>
</comment>
<comment type="catalytic activity">
    <reaction evidence="1">
        <text>3'-dephospho-CoA + ATP = ADP + CoA + H(+)</text>
        <dbReference type="Rhea" id="RHEA:18245"/>
        <dbReference type="ChEBI" id="CHEBI:15378"/>
        <dbReference type="ChEBI" id="CHEBI:30616"/>
        <dbReference type="ChEBI" id="CHEBI:57287"/>
        <dbReference type="ChEBI" id="CHEBI:57328"/>
        <dbReference type="ChEBI" id="CHEBI:456216"/>
        <dbReference type="EC" id="2.7.1.24"/>
    </reaction>
</comment>
<comment type="pathway">
    <text evidence="1">Cofactor biosynthesis; coenzyme A biosynthesis; CoA from (R)-pantothenate: step 5/5.</text>
</comment>
<comment type="subcellular location">
    <subcellularLocation>
        <location evidence="1">Cytoplasm</location>
    </subcellularLocation>
</comment>
<comment type="similarity">
    <text evidence="1">Belongs to the CoaE family.</text>
</comment>
<feature type="chain" id="PRO_0000172995" description="Dephospho-CoA kinase">
    <location>
        <begin position="1"/>
        <end position="205"/>
    </location>
</feature>
<feature type="domain" description="DPCK" evidence="1">
    <location>
        <begin position="5"/>
        <end position="201"/>
    </location>
</feature>
<feature type="binding site" evidence="1">
    <location>
        <begin position="13"/>
        <end position="18"/>
    </location>
    <ligand>
        <name>ATP</name>
        <dbReference type="ChEBI" id="CHEBI:30616"/>
    </ligand>
</feature>
<gene>
    <name evidence="1" type="primary">coaE</name>
    <name type="ordered locus">SO_0413</name>
</gene>
<sequence length="205" mass="22923">MSKFVVGLTGGIGSGKTTVANLFAEEGICLVDADVVAREVVAPGTHGLNAIISHFGTEMLTASGELDRAKLRQRVFNDEQERQWLNQLLHPMIRQEMLLQVEKATSDYVIMVVPLLFENGLDRLVHRTLVVDISPELQISRTVQRDNVDATQVNNIINSQCSRSEKLARADDIIDNHGEISRLKREVHALHQRYLQLSGNHNAHD</sequence>
<protein>
    <recommendedName>
        <fullName evidence="1">Dephospho-CoA kinase</fullName>
        <ecNumber evidence="1">2.7.1.24</ecNumber>
    </recommendedName>
    <alternativeName>
        <fullName evidence="1">Dephosphocoenzyme A kinase</fullName>
    </alternativeName>
</protein>
<reference key="1">
    <citation type="journal article" date="2002" name="Nat. Biotechnol.">
        <title>Genome sequence of the dissimilatory metal ion-reducing bacterium Shewanella oneidensis.</title>
        <authorList>
            <person name="Heidelberg J.F."/>
            <person name="Paulsen I.T."/>
            <person name="Nelson K.E."/>
            <person name="Gaidos E.J."/>
            <person name="Nelson W.C."/>
            <person name="Read T.D."/>
            <person name="Eisen J.A."/>
            <person name="Seshadri R."/>
            <person name="Ward N.L."/>
            <person name="Methe B.A."/>
            <person name="Clayton R.A."/>
            <person name="Meyer T."/>
            <person name="Tsapin A."/>
            <person name="Scott J."/>
            <person name="Beanan M.J."/>
            <person name="Brinkac L.M."/>
            <person name="Daugherty S.C."/>
            <person name="DeBoy R.T."/>
            <person name="Dodson R.J."/>
            <person name="Durkin A.S."/>
            <person name="Haft D.H."/>
            <person name="Kolonay J.F."/>
            <person name="Madupu R."/>
            <person name="Peterson J.D."/>
            <person name="Umayam L.A."/>
            <person name="White O."/>
            <person name="Wolf A.M."/>
            <person name="Vamathevan J.J."/>
            <person name="Weidman J.F."/>
            <person name="Impraim M."/>
            <person name="Lee K."/>
            <person name="Berry K.J."/>
            <person name="Lee C."/>
            <person name="Mueller J."/>
            <person name="Khouri H.M."/>
            <person name="Gill J."/>
            <person name="Utterback T.R."/>
            <person name="McDonald L.A."/>
            <person name="Feldblyum T.V."/>
            <person name="Smith H.O."/>
            <person name="Venter J.C."/>
            <person name="Nealson K.H."/>
            <person name="Fraser C.M."/>
        </authorList>
    </citation>
    <scope>NUCLEOTIDE SEQUENCE [LARGE SCALE GENOMIC DNA]</scope>
    <source>
        <strain>ATCC 700550 / JCM 31522 / CIP 106686 / LMG 19005 / NCIMB 14063 / MR-1</strain>
    </source>
</reference>
<proteinExistence type="inferred from homology"/>
<dbReference type="EC" id="2.7.1.24" evidence="1"/>
<dbReference type="EMBL" id="AE014299">
    <property type="protein sequence ID" value="AAN53496.1"/>
    <property type="molecule type" value="Genomic_DNA"/>
</dbReference>
<dbReference type="RefSeq" id="NP_716051.1">
    <property type="nucleotide sequence ID" value="NC_004347.2"/>
</dbReference>
<dbReference type="RefSeq" id="WP_011070773.1">
    <property type="nucleotide sequence ID" value="NC_004347.2"/>
</dbReference>
<dbReference type="SMR" id="Q8EJP9"/>
<dbReference type="STRING" id="211586.SO_0413"/>
<dbReference type="PaxDb" id="211586-SO_0413"/>
<dbReference type="KEGG" id="son:SO_0413"/>
<dbReference type="PATRIC" id="fig|211586.12.peg.403"/>
<dbReference type="eggNOG" id="COG0237">
    <property type="taxonomic scope" value="Bacteria"/>
</dbReference>
<dbReference type="HOGENOM" id="CLU_057180_1_2_6"/>
<dbReference type="OrthoDB" id="9812943at2"/>
<dbReference type="PhylomeDB" id="Q8EJP9"/>
<dbReference type="BioCyc" id="SONE211586:G1GMP-398-MONOMER"/>
<dbReference type="UniPathway" id="UPA00241">
    <property type="reaction ID" value="UER00356"/>
</dbReference>
<dbReference type="Proteomes" id="UP000008186">
    <property type="component" value="Chromosome"/>
</dbReference>
<dbReference type="GO" id="GO:0005737">
    <property type="term" value="C:cytoplasm"/>
    <property type="evidence" value="ECO:0007669"/>
    <property type="project" value="UniProtKB-SubCell"/>
</dbReference>
<dbReference type="GO" id="GO:0005524">
    <property type="term" value="F:ATP binding"/>
    <property type="evidence" value="ECO:0007669"/>
    <property type="project" value="UniProtKB-UniRule"/>
</dbReference>
<dbReference type="GO" id="GO:0004140">
    <property type="term" value="F:dephospho-CoA kinase activity"/>
    <property type="evidence" value="ECO:0000318"/>
    <property type="project" value="GO_Central"/>
</dbReference>
<dbReference type="GO" id="GO:0015937">
    <property type="term" value="P:coenzyme A biosynthetic process"/>
    <property type="evidence" value="ECO:0000318"/>
    <property type="project" value="GO_Central"/>
</dbReference>
<dbReference type="CDD" id="cd02022">
    <property type="entry name" value="DPCK"/>
    <property type="match status" value="1"/>
</dbReference>
<dbReference type="FunFam" id="3.40.50.300:FF:000518">
    <property type="entry name" value="Dephospho-CoA kinase"/>
    <property type="match status" value="1"/>
</dbReference>
<dbReference type="Gene3D" id="3.40.50.300">
    <property type="entry name" value="P-loop containing nucleotide triphosphate hydrolases"/>
    <property type="match status" value="1"/>
</dbReference>
<dbReference type="HAMAP" id="MF_00376">
    <property type="entry name" value="Dephospho_CoA_kinase"/>
    <property type="match status" value="1"/>
</dbReference>
<dbReference type="InterPro" id="IPR001977">
    <property type="entry name" value="Depp_CoAkinase"/>
</dbReference>
<dbReference type="InterPro" id="IPR027417">
    <property type="entry name" value="P-loop_NTPase"/>
</dbReference>
<dbReference type="NCBIfam" id="TIGR00152">
    <property type="entry name" value="dephospho-CoA kinase"/>
    <property type="match status" value="1"/>
</dbReference>
<dbReference type="PANTHER" id="PTHR10695:SF46">
    <property type="entry name" value="BIFUNCTIONAL COENZYME A SYNTHASE-RELATED"/>
    <property type="match status" value="1"/>
</dbReference>
<dbReference type="PANTHER" id="PTHR10695">
    <property type="entry name" value="DEPHOSPHO-COA KINASE-RELATED"/>
    <property type="match status" value="1"/>
</dbReference>
<dbReference type="Pfam" id="PF01121">
    <property type="entry name" value="CoaE"/>
    <property type="match status" value="1"/>
</dbReference>
<dbReference type="PRINTS" id="PR00988">
    <property type="entry name" value="URIDINKINASE"/>
</dbReference>
<dbReference type="SUPFAM" id="SSF52540">
    <property type="entry name" value="P-loop containing nucleoside triphosphate hydrolases"/>
    <property type="match status" value="1"/>
</dbReference>
<dbReference type="PROSITE" id="PS51219">
    <property type="entry name" value="DPCK"/>
    <property type="match status" value="1"/>
</dbReference>
<name>COAE_SHEON</name>
<evidence type="ECO:0000255" key="1">
    <source>
        <dbReference type="HAMAP-Rule" id="MF_00376"/>
    </source>
</evidence>